<organism>
    <name type="scientific">Methanocaldococcus jannaschii (strain ATCC 43067 / DSM 2661 / JAL-1 / JCM 10045 / NBRC 100440)</name>
    <name type="common">Methanococcus jannaschii</name>
    <dbReference type="NCBI Taxonomy" id="243232"/>
    <lineage>
        <taxon>Archaea</taxon>
        <taxon>Methanobacteriati</taxon>
        <taxon>Methanobacteriota</taxon>
        <taxon>Methanomada group</taxon>
        <taxon>Methanococci</taxon>
        <taxon>Methanococcales</taxon>
        <taxon>Methanocaldococcaceae</taxon>
        <taxon>Methanocaldococcus</taxon>
    </lineage>
</organism>
<accession>Q59048</accession>
<keyword id="KW-1185">Reference proteome</keyword>
<protein>
    <recommendedName>
        <fullName>Uncharacterized protein MJ1654</fullName>
    </recommendedName>
</protein>
<dbReference type="EMBL" id="L77117">
    <property type="protein sequence ID" value="AAB99683.1"/>
    <property type="molecule type" value="Genomic_DNA"/>
</dbReference>
<dbReference type="PIR" id="D64506">
    <property type="entry name" value="D64506"/>
</dbReference>
<dbReference type="SMR" id="Q59048"/>
<dbReference type="FunCoup" id="Q59048">
    <property type="interactions" value="1"/>
</dbReference>
<dbReference type="STRING" id="243232.MJ_1654"/>
<dbReference type="PaxDb" id="243232-MJ_1654"/>
<dbReference type="EnsemblBacteria" id="AAB99683">
    <property type="protein sequence ID" value="AAB99683"/>
    <property type="gene ID" value="MJ_1654"/>
</dbReference>
<dbReference type="KEGG" id="mja:MJ_1654"/>
<dbReference type="eggNOG" id="arCOG02261">
    <property type="taxonomic scope" value="Archaea"/>
</dbReference>
<dbReference type="HOGENOM" id="CLU_1335077_0_0_2"/>
<dbReference type="InParanoid" id="Q59048"/>
<dbReference type="Proteomes" id="UP000000805">
    <property type="component" value="Chromosome"/>
</dbReference>
<dbReference type="Gene3D" id="2.40.50.140">
    <property type="entry name" value="Nucleic acid-binding proteins"/>
    <property type="match status" value="1"/>
</dbReference>
<dbReference type="Gene3D" id="1.10.10.10">
    <property type="entry name" value="Winged helix-like DNA-binding domain superfamily/Winged helix DNA-binding domain"/>
    <property type="match status" value="1"/>
</dbReference>
<dbReference type="InterPro" id="IPR012340">
    <property type="entry name" value="NA-bd_OB-fold"/>
</dbReference>
<dbReference type="InterPro" id="IPR000717">
    <property type="entry name" value="PCI_dom"/>
</dbReference>
<dbReference type="InterPro" id="IPR036388">
    <property type="entry name" value="WH-like_DNA-bd_sf"/>
</dbReference>
<dbReference type="InterPro" id="IPR036390">
    <property type="entry name" value="WH_DNA-bd_sf"/>
</dbReference>
<dbReference type="Pfam" id="PF01399">
    <property type="entry name" value="PCI"/>
    <property type="match status" value="1"/>
</dbReference>
<dbReference type="SUPFAM" id="SSF50249">
    <property type="entry name" value="Nucleic acid-binding proteins"/>
    <property type="match status" value="1"/>
</dbReference>
<dbReference type="SUPFAM" id="SSF46785">
    <property type="entry name" value="Winged helix' DNA-binding domain"/>
    <property type="match status" value="1"/>
</dbReference>
<feature type="chain" id="PRO_0000107460" description="Uncharacterized protein MJ1654">
    <location>
        <begin position="1"/>
        <end position="225"/>
    </location>
</feature>
<feature type="domain" description="PCI">
    <location>
        <begin position="166"/>
        <end position="214"/>
    </location>
</feature>
<name>Y1654_METJA</name>
<gene>
    <name type="ordered locus">MJ1654</name>
</gene>
<reference key="1">
    <citation type="journal article" date="1996" name="Science">
        <title>Complete genome sequence of the methanogenic archaeon, Methanococcus jannaschii.</title>
        <authorList>
            <person name="Bult C.J."/>
            <person name="White O."/>
            <person name="Olsen G.J."/>
            <person name="Zhou L."/>
            <person name="Fleischmann R.D."/>
            <person name="Sutton G.G."/>
            <person name="Blake J.A."/>
            <person name="FitzGerald L.M."/>
            <person name="Clayton R.A."/>
            <person name="Gocayne J.D."/>
            <person name="Kerlavage A.R."/>
            <person name="Dougherty B.A."/>
            <person name="Tomb J.-F."/>
            <person name="Adams M.D."/>
            <person name="Reich C.I."/>
            <person name="Overbeek R."/>
            <person name="Kirkness E.F."/>
            <person name="Weinstock K.G."/>
            <person name="Merrick J.M."/>
            <person name="Glodek A."/>
            <person name="Scott J.L."/>
            <person name="Geoghagen N.S.M."/>
            <person name="Weidman J.F."/>
            <person name="Fuhrmann J.L."/>
            <person name="Nguyen D."/>
            <person name="Utterback T.R."/>
            <person name="Kelley J.M."/>
            <person name="Peterson J.D."/>
            <person name="Sadow P.W."/>
            <person name="Hanna M.C."/>
            <person name="Cotton M.D."/>
            <person name="Roberts K.M."/>
            <person name="Hurst M.A."/>
            <person name="Kaine B.P."/>
            <person name="Borodovsky M."/>
            <person name="Klenk H.-P."/>
            <person name="Fraser C.M."/>
            <person name="Smith H.O."/>
            <person name="Woese C.R."/>
            <person name="Venter J.C."/>
        </authorList>
    </citation>
    <scope>NUCLEOTIDE SEQUENCE [LARGE SCALE GENOMIC DNA]</scope>
    <source>
        <strain>ATCC 43067 / DSM 2661 / JAL-1 / JCM 10045 / NBRC 100440</strain>
    </source>
</reference>
<sequence length="225" mass="26418">MGYPTPIKLGLSAPINVPLIYKTGEKMRYVAYKIYPEEFLNNEVVDNALIIEGRKVRRVRILGKVENINVGNIISFYVDGVNVRYFEEKPVYIEEGDIVDVIGRPRTYDGEKYIMAEIIRKRDERWIKLRDLEIKKTRKYLLERAELYEEENEEMSLEEEVYTEILNSDVIKDKILAIIENVGEITYEELAEKINIPEEDLEKYLSELKESGDIFEPRPGVYKVL</sequence>
<proteinExistence type="predicted"/>